<keyword id="KW-1015">Disulfide bond</keyword>
<keyword id="KW-0964">Secreted</keyword>
<keyword id="KW-0732">Signal</keyword>
<evidence type="ECO:0000250" key="1"/>
<evidence type="ECO:0000255" key="2"/>
<organism>
    <name type="scientific">Tityus costatus</name>
    <name type="common">Brazilian scorpion</name>
    <dbReference type="NCBI Taxonomy" id="309814"/>
    <lineage>
        <taxon>Eukaryota</taxon>
        <taxon>Metazoa</taxon>
        <taxon>Ecdysozoa</taxon>
        <taxon>Arthropoda</taxon>
        <taxon>Chelicerata</taxon>
        <taxon>Arachnida</taxon>
        <taxon>Scorpiones</taxon>
        <taxon>Buthida</taxon>
        <taxon>Buthoidea</taxon>
        <taxon>Buthidae</taxon>
        <taxon>Tityus</taxon>
    </lineage>
</organism>
<reference key="1">
    <citation type="journal article" date="2005" name="Toxicon">
        <title>The Brazilian scorpion Tityus costatus Karsch: genes, peptides and function.</title>
        <authorList>
            <person name="Diego-Garcia E."/>
            <person name="Batista C.V.F."/>
            <person name="Garcia-Gomez B.I."/>
            <person name="Lucas S."/>
            <person name="Candido D.M."/>
            <person name="Gomez-Lagunas F."/>
            <person name="Possani L.D."/>
        </authorList>
    </citation>
    <scope>NUCLEOTIDE SEQUENCE [MRNA]</scope>
    <source>
        <tissue>Venom gland</tissue>
    </source>
</reference>
<accession>Q5G8B7</accession>
<name>CYSPE_TITCO</name>
<protein>
    <recommendedName>
        <fullName>Cysteine-rich peptide clone 2</fullName>
    </recommendedName>
</protein>
<proteinExistence type="evidence at transcript level"/>
<comment type="subcellular location">
    <subcellularLocation>
        <location>Secreted</location>
    </subcellularLocation>
</comment>
<comment type="tissue specificity">
    <text>Expressed by the venom gland.</text>
</comment>
<feature type="signal peptide" evidence="2">
    <location>
        <begin position="1"/>
        <end position="23"/>
    </location>
</feature>
<feature type="chain" id="PRO_0000231519" description="Cysteine-rich peptide clone 2">
    <location>
        <begin position="24"/>
        <end position="63"/>
    </location>
</feature>
<feature type="disulfide bond" evidence="1">
    <location>
        <begin position="33"/>
        <end position="53"/>
    </location>
</feature>
<feature type="disulfide bond" evidence="1">
    <location>
        <begin position="38"/>
        <end position="58"/>
    </location>
</feature>
<feature type="disulfide bond" evidence="1">
    <location>
        <begin position="42"/>
        <end position="60"/>
    </location>
</feature>
<dbReference type="EMBL" id="AY740684">
    <property type="protein sequence ID" value="AAW72454.1"/>
    <property type="molecule type" value="mRNA"/>
</dbReference>
<dbReference type="SMR" id="Q5G8B7"/>
<dbReference type="GO" id="GO:0005576">
    <property type="term" value="C:extracellular region"/>
    <property type="evidence" value="ECO:0007669"/>
    <property type="project" value="UniProtKB-SubCell"/>
</dbReference>
<sequence>MHFSGVVLILLSMTLVNFVFVETKVETGQYVKCKYDICAKSCQEEKGKRTGFCSNPECICSKD</sequence>